<sequence>MSINDPIGDLITRIRNAQMRRKDKTSTPGSRLRASLLDVLRDEGYIRGYTTTDHGNGRTEFEIELKYFDGQPVIREITRVSKPGRRVYASVKALPRVANGLGIAVLSTPQGVMADHDARDKNVGGEVLCTVF</sequence>
<name>RS8_AZOC5</name>
<evidence type="ECO:0000255" key="1">
    <source>
        <dbReference type="HAMAP-Rule" id="MF_01302"/>
    </source>
</evidence>
<evidence type="ECO:0000305" key="2"/>
<reference key="1">
    <citation type="submission" date="2007-04" db="EMBL/GenBank/DDBJ databases">
        <title>Complete genome sequence of the nitrogen-fixing bacterium Azorhizobium caulinodans ORS571.</title>
        <authorList>
            <person name="Lee K.B."/>
            <person name="Backer P.D."/>
            <person name="Aono T."/>
            <person name="Liu C.T."/>
            <person name="Suzuki S."/>
            <person name="Suzuki T."/>
            <person name="Kaneko T."/>
            <person name="Yamada M."/>
            <person name="Tabata S."/>
            <person name="Kupfer D.M."/>
            <person name="Najar F.Z."/>
            <person name="Wiley G.B."/>
            <person name="Roe B."/>
            <person name="Binnewies T."/>
            <person name="Ussery D."/>
            <person name="Vereecke D."/>
            <person name="Gevers D."/>
            <person name="Holsters M."/>
            <person name="Oyaizu H."/>
        </authorList>
    </citation>
    <scope>NUCLEOTIDE SEQUENCE [LARGE SCALE GENOMIC DNA]</scope>
    <source>
        <strain>ATCC 43989 / DSM 5975 / JCM 20966 / LMG 6465 / NBRC 14845 / NCIMB 13405 / ORS 571</strain>
    </source>
</reference>
<protein>
    <recommendedName>
        <fullName evidence="1">Small ribosomal subunit protein uS8</fullName>
    </recommendedName>
    <alternativeName>
        <fullName evidence="2">30S ribosomal protein S8</fullName>
    </alternativeName>
</protein>
<dbReference type="EMBL" id="AP009384">
    <property type="protein sequence ID" value="BAF88538.1"/>
    <property type="molecule type" value="Genomic_DNA"/>
</dbReference>
<dbReference type="RefSeq" id="WP_012171066.1">
    <property type="nucleotide sequence ID" value="NC_009937.1"/>
</dbReference>
<dbReference type="SMR" id="A8IAQ0"/>
<dbReference type="STRING" id="438753.AZC_2540"/>
<dbReference type="KEGG" id="azc:AZC_2540"/>
<dbReference type="eggNOG" id="COG0096">
    <property type="taxonomic scope" value="Bacteria"/>
</dbReference>
<dbReference type="HOGENOM" id="CLU_098428_0_0_5"/>
<dbReference type="Proteomes" id="UP000000270">
    <property type="component" value="Chromosome"/>
</dbReference>
<dbReference type="GO" id="GO:1990904">
    <property type="term" value="C:ribonucleoprotein complex"/>
    <property type="evidence" value="ECO:0007669"/>
    <property type="project" value="UniProtKB-KW"/>
</dbReference>
<dbReference type="GO" id="GO:0005840">
    <property type="term" value="C:ribosome"/>
    <property type="evidence" value="ECO:0007669"/>
    <property type="project" value="UniProtKB-KW"/>
</dbReference>
<dbReference type="GO" id="GO:0019843">
    <property type="term" value="F:rRNA binding"/>
    <property type="evidence" value="ECO:0007669"/>
    <property type="project" value="UniProtKB-UniRule"/>
</dbReference>
<dbReference type="GO" id="GO:0003735">
    <property type="term" value="F:structural constituent of ribosome"/>
    <property type="evidence" value="ECO:0007669"/>
    <property type="project" value="InterPro"/>
</dbReference>
<dbReference type="GO" id="GO:0006412">
    <property type="term" value="P:translation"/>
    <property type="evidence" value="ECO:0007669"/>
    <property type="project" value="UniProtKB-UniRule"/>
</dbReference>
<dbReference type="FunFam" id="3.30.1490.10:FF:000001">
    <property type="entry name" value="30S ribosomal protein S8"/>
    <property type="match status" value="1"/>
</dbReference>
<dbReference type="Gene3D" id="3.30.1370.30">
    <property type="match status" value="1"/>
</dbReference>
<dbReference type="Gene3D" id="3.30.1490.10">
    <property type="match status" value="1"/>
</dbReference>
<dbReference type="HAMAP" id="MF_01302_B">
    <property type="entry name" value="Ribosomal_uS8_B"/>
    <property type="match status" value="1"/>
</dbReference>
<dbReference type="InterPro" id="IPR000630">
    <property type="entry name" value="Ribosomal_uS8"/>
</dbReference>
<dbReference type="InterPro" id="IPR047863">
    <property type="entry name" value="Ribosomal_uS8_CS"/>
</dbReference>
<dbReference type="InterPro" id="IPR035987">
    <property type="entry name" value="Ribosomal_uS8_sf"/>
</dbReference>
<dbReference type="NCBIfam" id="NF001109">
    <property type="entry name" value="PRK00136.1"/>
    <property type="match status" value="1"/>
</dbReference>
<dbReference type="PANTHER" id="PTHR11758">
    <property type="entry name" value="40S RIBOSOMAL PROTEIN S15A"/>
    <property type="match status" value="1"/>
</dbReference>
<dbReference type="Pfam" id="PF00410">
    <property type="entry name" value="Ribosomal_S8"/>
    <property type="match status" value="1"/>
</dbReference>
<dbReference type="SUPFAM" id="SSF56047">
    <property type="entry name" value="Ribosomal protein S8"/>
    <property type="match status" value="1"/>
</dbReference>
<dbReference type="PROSITE" id="PS00053">
    <property type="entry name" value="RIBOSOMAL_S8"/>
    <property type="match status" value="1"/>
</dbReference>
<feature type="chain" id="PRO_1000073189" description="Small ribosomal subunit protein uS8">
    <location>
        <begin position="1"/>
        <end position="132"/>
    </location>
</feature>
<organism>
    <name type="scientific">Azorhizobium caulinodans (strain ATCC 43989 / DSM 5975 / JCM 20966 / LMG 6465 / NBRC 14845 / NCIMB 13405 / ORS 571)</name>
    <dbReference type="NCBI Taxonomy" id="438753"/>
    <lineage>
        <taxon>Bacteria</taxon>
        <taxon>Pseudomonadati</taxon>
        <taxon>Pseudomonadota</taxon>
        <taxon>Alphaproteobacteria</taxon>
        <taxon>Hyphomicrobiales</taxon>
        <taxon>Xanthobacteraceae</taxon>
        <taxon>Azorhizobium</taxon>
    </lineage>
</organism>
<accession>A8IAQ0</accession>
<comment type="function">
    <text evidence="1">One of the primary rRNA binding proteins, it binds directly to 16S rRNA central domain where it helps coordinate assembly of the platform of the 30S subunit.</text>
</comment>
<comment type="subunit">
    <text evidence="1">Part of the 30S ribosomal subunit. Contacts proteins S5 and S12.</text>
</comment>
<comment type="similarity">
    <text evidence="1">Belongs to the universal ribosomal protein uS8 family.</text>
</comment>
<proteinExistence type="inferred from homology"/>
<gene>
    <name evidence="1" type="primary">rpsH</name>
    <name type="ordered locus">AZC_2540</name>
</gene>
<keyword id="KW-1185">Reference proteome</keyword>
<keyword id="KW-0687">Ribonucleoprotein</keyword>
<keyword id="KW-0689">Ribosomal protein</keyword>
<keyword id="KW-0694">RNA-binding</keyword>
<keyword id="KW-0699">rRNA-binding</keyword>